<reference key="1">
    <citation type="journal article" date="2005" name="Proc. Natl. Acad. Sci. U.S.A.">
        <title>The viral polymerase mediates adaptation of an avian influenza virus to a mammalian host.</title>
        <authorList>
            <person name="Gabriel G."/>
            <person name="Dauber B."/>
            <person name="Wolff T."/>
            <person name="Planz O."/>
            <person name="Klenk H.D."/>
            <person name="Stech J."/>
        </authorList>
    </citation>
    <scope>NUCLEOTIDE SEQUENCE [GENOMIC RNA]</scope>
    <source>
        <strain>SC35M mouse-adapted</strain>
    </source>
</reference>
<protein>
    <recommendedName>
        <fullName evidence="1">Nuclear export protein</fullName>
        <shortName evidence="1">NEP</shortName>
    </recommendedName>
    <alternativeName>
        <fullName evidence="1">Non-structural protein 2</fullName>
        <shortName evidence="1">NS2</shortName>
    </alternativeName>
</protein>
<feature type="chain" id="PRO_0000324221" description="Nuclear export protein">
    <location>
        <begin position="1"/>
        <end position="121"/>
    </location>
</feature>
<feature type="short sequence motif" description="Nuclear export signal" evidence="1">
    <location>
        <begin position="12"/>
        <end position="21"/>
    </location>
</feature>
<feature type="short sequence motif" description="Nuclear export signal" evidence="1">
    <location>
        <begin position="85"/>
        <end position="94"/>
    </location>
</feature>
<accession>Q2VC88</accession>
<sequence length="121" mass="14338">MDSNTVSSFQDILMRMSKMQLGSSSEDLNGMITQFESLKLYRDSLGEAVMRMGDLHSLQSRNGKWREQLSQKFEEIRWLIEEVRHRLKITENSFEQITFMQALQLLLEVEQEIRTFSFQLI</sequence>
<organismHost>
    <name type="scientific">Aves</name>
    <dbReference type="NCBI Taxonomy" id="8782"/>
</organismHost>
<organismHost>
    <name type="scientific">Equus caballus</name>
    <name type="common">Horse</name>
    <dbReference type="NCBI Taxonomy" id="9796"/>
</organismHost>
<organismHost>
    <name type="scientific">Homo sapiens</name>
    <name type="common">Human</name>
    <dbReference type="NCBI Taxonomy" id="9606"/>
</organismHost>
<organismHost>
    <name type="scientific">Phocidae</name>
    <name type="common">true seals</name>
    <dbReference type="NCBI Taxonomy" id="9709"/>
</organismHost>
<name>NEP_I80A2</name>
<organism>
    <name type="scientific">Influenza A virus (strain A/Seal/Massachusetts/1/1980 H7N7)</name>
    <dbReference type="NCBI Taxonomy" id="384493"/>
    <lineage>
        <taxon>Viruses</taxon>
        <taxon>Riboviria</taxon>
        <taxon>Orthornavirae</taxon>
        <taxon>Negarnaviricota</taxon>
        <taxon>Polyploviricotina</taxon>
        <taxon>Insthoviricetes</taxon>
        <taxon>Articulavirales</taxon>
        <taxon>Orthomyxoviridae</taxon>
        <taxon>Alphainfluenzavirus</taxon>
        <taxon>Alphainfluenzavirus influenzae</taxon>
        <taxon>Influenza A virus</taxon>
    </lineage>
</organism>
<keyword id="KW-0025">Alternative splicing</keyword>
<keyword id="KW-1048">Host nucleus</keyword>
<keyword id="KW-0945">Host-virus interaction</keyword>
<keyword id="KW-0813">Transport</keyword>
<keyword id="KW-0946">Virion</keyword>
<gene>
    <name evidence="1" type="primary">NS</name>
</gene>
<evidence type="ECO:0000255" key="1">
    <source>
        <dbReference type="HAMAP-Rule" id="MF_04067"/>
    </source>
</evidence>
<dbReference type="EMBL" id="DQ266101">
    <property type="protein sequence ID" value="ABB90276.1"/>
    <property type="molecule type" value="Genomic_RNA"/>
</dbReference>
<dbReference type="SMR" id="Q2VC88"/>
<dbReference type="Proteomes" id="UP000008576">
    <property type="component" value="Genome"/>
</dbReference>
<dbReference type="GO" id="GO:0042025">
    <property type="term" value="C:host cell nucleus"/>
    <property type="evidence" value="ECO:0007669"/>
    <property type="project" value="UniProtKB-SubCell"/>
</dbReference>
<dbReference type="GO" id="GO:0044423">
    <property type="term" value="C:virion component"/>
    <property type="evidence" value="ECO:0007669"/>
    <property type="project" value="UniProtKB-UniRule"/>
</dbReference>
<dbReference type="GO" id="GO:0039675">
    <property type="term" value="P:exit of virus from host cell nucleus through nuclear pore"/>
    <property type="evidence" value="ECO:0007669"/>
    <property type="project" value="UniProtKB-UniRule"/>
</dbReference>
<dbReference type="Gene3D" id="1.10.287.230">
    <property type="match status" value="1"/>
</dbReference>
<dbReference type="Gene3D" id="1.10.287.10">
    <property type="entry name" value="S15/NS1, RNA-binding"/>
    <property type="match status" value="1"/>
</dbReference>
<dbReference type="HAMAP" id="MF_04067">
    <property type="entry name" value="INFV_NEP"/>
    <property type="match status" value="1"/>
</dbReference>
<dbReference type="InterPro" id="IPR000968">
    <property type="entry name" value="Flu_NS2"/>
</dbReference>
<dbReference type="Pfam" id="PF00601">
    <property type="entry name" value="Flu_NS2"/>
    <property type="match status" value="1"/>
</dbReference>
<dbReference type="SUPFAM" id="SSF101156">
    <property type="entry name" value="Nonstructural protein ns2, Nep, M1-binding domain"/>
    <property type="match status" value="1"/>
</dbReference>
<proteinExistence type="inferred from homology"/>
<comment type="function">
    <text evidence="1">Mediates the nuclear export of encapsidated genomic RNAs (ribonucleoproteins, RNPs). Acts as an adapter between viral RNPs complexes and the nuclear export machinery of the cell. Possesses no intrinsic RNA-binding activity, but includes a C-terminal M1-binding domain. This domain is believed to allow recognition of RNPs bound to the protein M1. Since protein M1 is not available in large quantities before late stages of infection, such an indirect recognition mechanism probably ensures that genomic RNPs are not exported from the host nucleus until sufficient quantities of viral mRNA and progeny genomic RNA have been synthesized. Furthermore, the RNPs enter the host cytoplasm only when associated with the M1 protein that is necessary to guide them to the plasma membrane. May down-regulate viral RNA synthesis when overproduced.</text>
</comment>
<comment type="subunit">
    <text evidence="1">Interacts with protein M1. May interact with host nucleoporin RAB/HRB and exportin XPO1/CRM1.</text>
</comment>
<comment type="subcellular location">
    <subcellularLocation>
        <location evidence="1">Virion</location>
    </subcellularLocation>
    <subcellularLocation>
        <location evidence="1">Host nucleus</location>
    </subcellularLocation>
</comment>
<comment type="alternative products">
    <event type="alternative splicing"/>
    <isoform>
        <id>Q2VC88-1</id>
        <name>NEP</name>
        <name>NS2</name>
        <sequence type="displayed"/>
    </isoform>
    <isoform>
        <id>Q2VC87-1</id>
        <name>NS1</name>
        <sequence type="external"/>
    </isoform>
</comment>
<comment type="miscellaneous">
    <text>SC35 was derived from A/Seal/Massachussetts/1/80 (H7N7) by serial passages in chicken embryo cells, thereby acquiring a multibasic cleavage site in its hemagglutinin (HA) and becoming 100% lethal for chickens. SC35 was then passaged 11 times in mouse lung, yielding the mouse-adapted variant SC35M.</text>
</comment>
<comment type="similarity">
    <text evidence="1">Belongs to the influenza viruses NEP family.</text>
</comment>